<sequence length="587" mass="66430">MNKTENLSIEETNEIREKLGMKPIPVFQEKNTDHKESLSIEETNELRASLGLKLIPPQQNFNSSPPNVHNTSKIDELREKITKFQKKANAPLRMAHLLEETNVNDDSSWLENMDAIPSSHESKRSSTLPRKGATKEDENIDLHNVQVSYNIEALSPKKDTILTLKESSIFDDTDSTEVLENVKAAEENADREKLRLRQMNKDRRQKKKILNVSSLDIEEEEEGEKHSITTTHLIIGAEQGVMKAPNTISAKPPTGKVKVNFDSANNMSDEDGGDFKPLKIKKRKIKDPRSTKARKSKITDKMEIVKLVDEDESLSWMEEEQPVTIINPRTSSNNELKGPEDLAREIEKARDEEKRRTESILKMREISNSIVVDEKVTFLNTLDTSLSERSATENKVKVHGEGEKNIGDVTNGHTKEGSGNNTLTEAVNNEPNYEGDAENAPNFFSGLASTLGYLRKKSVFTTGDVDLKPGKDVNNSESLRRDVRNKEHTGTGTYTKDKLHGLEQFTSSDSSNANTHSKRQDHYDPDIKLVYRDEKGNRLTTKEAYKKLSQKFHGTKSNKKKRAKMKSRIEARKNTPENGSLFEFDDN</sequence>
<comment type="function">
    <text evidence="4">Component of the U4/U6.U5 tri-snRNP particle, one of the building blocks of the spliceosome. Required for pre-mRNA splicing.</text>
</comment>
<comment type="subunit">
    <text evidence="2 3 4 5 7">Component of the U4/U6-U5 tri-snRNP complex composed of the U4, U6 and U5 snRNAs and at least PRP3, PRP4, PRP6, PRP8, PRP18, PRP31, PRP38, SNU13, SNU23, SNU66, SNU114, SPP381, SMB1, SMD1, SMD2, SMD3, SMX2, SMX3, LSM2, LSM3, LSM4, LSM5, LSM6, LSM7, LSM8, BRR2 and DIB1. Interacts with the pre-mRNA-splicing helicase BRR2 and the ubiquitin-like modifier HUB1.</text>
</comment>
<comment type="subcellular location">
    <subcellularLocation>
        <location evidence="4 6">Nucleus</location>
    </subcellularLocation>
</comment>
<comment type="similarity">
    <text evidence="8">Belongs to the SNU66/SART1 family.</text>
</comment>
<proteinExistence type="evidence at protein level"/>
<feature type="chain" id="PRO_0000232635" description="66 kDa U4/U6.U5 small nuclear ribonucleoprotein component">
    <location>
        <begin position="1"/>
        <end position="587"/>
    </location>
</feature>
<feature type="region of interest" description="Disordered" evidence="1">
    <location>
        <begin position="403"/>
        <end position="423"/>
    </location>
</feature>
<feature type="region of interest" description="Disordered" evidence="1">
    <location>
        <begin position="471"/>
        <end position="526"/>
    </location>
</feature>
<feature type="region of interest" description="Disordered" evidence="1">
    <location>
        <begin position="547"/>
        <end position="587"/>
    </location>
</feature>
<feature type="compositionally biased region" description="Basic and acidic residues" evidence="1">
    <location>
        <begin position="478"/>
        <end position="501"/>
    </location>
</feature>
<feature type="compositionally biased region" description="Polar residues" evidence="1">
    <location>
        <begin position="504"/>
        <end position="515"/>
    </location>
</feature>
<feature type="compositionally biased region" description="Basic residues" evidence="1">
    <location>
        <begin position="548"/>
        <end position="566"/>
    </location>
</feature>
<feature type="modified residue" description="Phosphoserine" evidence="9 10 11">
    <location>
        <position position="268"/>
    </location>
</feature>
<feature type="helix" evidence="12">
    <location>
        <begin position="9"/>
        <end position="18"/>
    </location>
</feature>
<feature type="helix" evidence="13">
    <location>
        <begin position="40"/>
        <end position="49"/>
    </location>
</feature>
<organism>
    <name type="scientific">Saccharomyces cerevisiae (strain ATCC 204508 / S288c)</name>
    <name type="common">Baker's yeast</name>
    <dbReference type="NCBI Taxonomy" id="559292"/>
    <lineage>
        <taxon>Eukaryota</taxon>
        <taxon>Fungi</taxon>
        <taxon>Dikarya</taxon>
        <taxon>Ascomycota</taxon>
        <taxon>Saccharomycotina</taxon>
        <taxon>Saccharomycetes</taxon>
        <taxon>Saccharomycetales</taxon>
        <taxon>Saccharomycetaceae</taxon>
        <taxon>Saccharomyces</taxon>
    </lineage>
</organism>
<protein>
    <recommendedName>
        <fullName>66 kDa U4/U6.U5 small nuclear ribonucleoprotein component</fullName>
    </recommendedName>
</protein>
<dbReference type="EMBL" id="X90565">
    <property type="protein sequence ID" value="CAA62162.1"/>
    <property type="molecule type" value="Genomic_DNA"/>
</dbReference>
<dbReference type="EMBL" id="Z75216">
    <property type="protein sequence ID" value="CAA99628.1"/>
    <property type="molecule type" value="Genomic_DNA"/>
</dbReference>
<dbReference type="EMBL" id="BK006948">
    <property type="protein sequence ID" value="DAA11074.1"/>
    <property type="molecule type" value="Genomic_DNA"/>
</dbReference>
<dbReference type="PIR" id="S58319">
    <property type="entry name" value="S58319"/>
</dbReference>
<dbReference type="RefSeq" id="NP_014953.3">
    <property type="nucleotide sequence ID" value="NM_001183728.3"/>
</dbReference>
<dbReference type="PDB" id="3PLU">
    <property type="method" value="X-ray"/>
    <property type="resolution" value="1.40 A"/>
    <property type="chains" value="C/D=6-24"/>
</dbReference>
<dbReference type="PDB" id="3PLV">
    <property type="method" value="X-ray"/>
    <property type="resolution" value="1.90 A"/>
    <property type="chains" value="C=37-57"/>
</dbReference>
<dbReference type="PDB" id="5GAN">
    <property type="method" value="EM"/>
    <property type="resolution" value="3.60 A"/>
    <property type="chains" value="E=540-560"/>
</dbReference>
<dbReference type="PDB" id="5GAO">
    <property type="method" value="EM"/>
    <property type="resolution" value="3.60 A"/>
    <property type="chains" value="E=540-560"/>
</dbReference>
<dbReference type="PDB" id="5NRL">
    <property type="method" value="EM"/>
    <property type="resolution" value="7.20 A"/>
    <property type="chains" value="E=1-587"/>
</dbReference>
<dbReference type="PDB" id="5ZWM">
    <property type="method" value="EM"/>
    <property type="resolution" value="3.40 A"/>
    <property type="chains" value="O=1-587"/>
</dbReference>
<dbReference type="PDB" id="5ZWO">
    <property type="method" value="EM"/>
    <property type="resolution" value="3.90 A"/>
    <property type="chains" value="O=1-587"/>
</dbReference>
<dbReference type="PDBsum" id="3PLU"/>
<dbReference type="PDBsum" id="3PLV"/>
<dbReference type="PDBsum" id="5GAN"/>
<dbReference type="PDBsum" id="5GAO"/>
<dbReference type="PDBsum" id="5NRL"/>
<dbReference type="PDBsum" id="5ZWM"/>
<dbReference type="PDBsum" id="5ZWO"/>
<dbReference type="EMDB" id="EMD-3683"/>
<dbReference type="EMDB" id="EMD-6972"/>
<dbReference type="EMDB" id="EMD-6974"/>
<dbReference type="SMR" id="Q12420"/>
<dbReference type="BioGRID" id="34697">
    <property type="interactions" value="276"/>
</dbReference>
<dbReference type="ComplexPortal" id="CPX-25">
    <property type="entry name" value="U4/U6.U5 tri-small nuclear ribonucleoprotein complex"/>
</dbReference>
<dbReference type="DIP" id="DIP-5216N"/>
<dbReference type="FunCoup" id="Q12420">
    <property type="interactions" value="983"/>
</dbReference>
<dbReference type="IntAct" id="Q12420">
    <property type="interactions" value="34"/>
</dbReference>
<dbReference type="MINT" id="Q12420"/>
<dbReference type="STRING" id="4932.YOR308C"/>
<dbReference type="iPTMnet" id="Q12420"/>
<dbReference type="PaxDb" id="4932-YOR308C"/>
<dbReference type="PeptideAtlas" id="Q12420"/>
<dbReference type="EnsemblFungi" id="YOR308C_mRNA">
    <property type="protein sequence ID" value="YOR308C"/>
    <property type="gene ID" value="YOR308C"/>
</dbReference>
<dbReference type="GeneID" id="854485"/>
<dbReference type="KEGG" id="sce:YOR308C"/>
<dbReference type="AGR" id="SGD:S000005835"/>
<dbReference type="SGD" id="S000005835">
    <property type="gene designation" value="SNU66"/>
</dbReference>
<dbReference type="VEuPathDB" id="FungiDB:YOR308C"/>
<dbReference type="eggNOG" id="KOG2217">
    <property type="taxonomic scope" value="Eukaryota"/>
</dbReference>
<dbReference type="HOGENOM" id="CLU_018358_0_0_1"/>
<dbReference type="InParanoid" id="Q12420"/>
<dbReference type="OMA" id="FNGRHYR"/>
<dbReference type="OrthoDB" id="5583at2759"/>
<dbReference type="BioCyc" id="YEAST:G3O-33792-MONOMER"/>
<dbReference type="BioGRID-ORCS" id="854485">
    <property type="hits" value="1 hit in 10 CRISPR screens"/>
</dbReference>
<dbReference type="EvolutionaryTrace" id="Q12420"/>
<dbReference type="PRO" id="PR:Q12420"/>
<dbReference type="Proteomes" id="UP000002311">
    <property type="component" value="Chromosome XV"/>
</dbReference>
<dbReference type="RNAct" id="Q12420">
    <property type="molecule type" value="protein"/>
</dbReference>
<dbReference type="GO" id="GO:0005634">
    <property type="term" value="C:nucleus"/>
    <property type="evidence" value="ECO:0000314"/>
    <property type="project" value="CACAO"/>
</dbReference>
<dbReference type="GO" id="GO:0005681">
    <property type="term" value="C:spliceosomal complex"/>
    <property type="evidence" value="ECO:0000303"/>
    <property type="project" value="ComplexPortal"/>
</dbReference>
<dbReference type="GO" id="GO:0046540">
    <property type="term" value="C:U4/U6 x U5 tri-snRNP complex"/>
    <property type="evidence" value="ECO:0000314"/>
    <property type="project" value="SGD"/>
</dbReference>
<dbReference type="GO" id="GO:0000481">
    <property type="term" value="P:maturation of 5S rRNA"/>
    <property type="evidence" value="ECO:0000315"/>
    <property type="project" value="SGD"/>
</dbReference>
<dbReference type="GO" id="GO:0045292">
    <property type="term" value="P:mRNA cis splicing, via spliceosome"/>
    <property type="evidence" value="ECO:0000318"/>
    <property type="project" value="GO_Central"/>
</dbReference>
<dbReference type="GO" id="GO:0000398">
    <property type="term" value="P:mRNA splicing, via spliceosome"/>
    <property type="evidence" value="ECO:0000315"/>
    <property type="project" value="SGD"/>
</dbReference>
<dbReference type="InterPro" id="IPR045347">
    <property type="entry name" value="HIND"/>
</dbReference>
<dbReference type="InterPro" id="IPR005011">
    <property type="entry name" value="SNU66/SART1"/>
</dbReference>
<dbReference type="PANTHER" id="PTHR14152">
    <property type="entry name" value="SQUAMOUS CELL CARCINOMA ANTIGEN RECOGNISED BY CYTOTOXIC T LYMPHOCYTES"/>
    <property type="match status" value="1"/>
</dbReference>
<dbReference type="PANTHER" id="PTHR14152:SF5">
    <property type="entry name" value="U4_U6.U5 TRI-SNRNP-ASSOCIATED PROTEIN 1"/>
    <property type="match status" value="1"/>
</dbReference>
<dbReference type="Pfam" id="PF19252">
    <property type="entry name" value="HIND"/>
    <property type="match status" value="2"/>
</dbReference>
<dbReference type="Pfam" id="PF03343">
    <property type="entry name" value="SART-1"/>
    <property type="match status" value="1"/>
</dbReference>
<name>SNU66_YEAST</name>
<accession>Q12420</accession>
<accession>D6W308</accession>
<gene>
    <name type="primary">SNU66</name>
    <name type="ordered locus">YOR308C</name>
    <name type="ORF">05667</name>
</gene>
<keyword id="KW-0002">3D-structure</keyword>
<keyword id="KW-0507">mRNA processing</keyword>
<keyword id="KW-0508">mRNA splicing</keyword>
<keyword id="KW-0539">Nucleus</keyword>
<keyword id="KW-0597">Phosphoprotein</keyword>
<keyword id="KW-1185">Reference proteome</keyword>
<keyword id="KW-0687">Ribonucleoprotein</keyword>
<keyword id="KW-0747">Spliceosome</keyword>
<evidence type="ECO:0000256" key="1">
    <source>
        <dbReference type="SAM" id="MobiDB-lite"/>
    </source>
</evidence>
<evidence type="ECO:0000269" key="2">
    <source>
    </source>
</evidence>
<evidence type="ECO:0000269" key="3">
    <source>
    </source>
</evidence>
<evidence type="ECO:0000269" key="4">
    <source>
    </source>
</evidence>
<evidence type="ECO:0000269" key="5">
    <source>
    </source>
</evidence>
<evidence type="ECO:0000269" key="6">
    <source>
    </source>
</evidence>
<evidence type="ECO:0000269" key="7">
    <source>
    </source>
</evidence>
<evidence type="ECO:0000305" key="8"/>
<evidence type="ECO:0007744" key="9">
    <source>
    </source>
</evidence>
<evidence type="ECO:0007744" key="10">
    <source>
    </source>
</evidence>
<evidence type="ECO:0007744" key="11">
    <source>
    </source>
</evidence>
<evidence type="ECO:0007829" key="12">
    <source>
        <dbReference type="PDB" id="3PLU"/>
    </source>
</evidence>
<evidence type="ECO:0007829" key="13">
    <source>
        <dbReference type="PDB" id="3PLV"/>
    </source>
</evidence>
<reference key="1">
    <citation type="journal article" date="1996" name="Yeast">
        <title>Sequencing of a 35.71 kb DNA segment on the right arm of yeast chromosome XV reveals regions of similarity to chromosomes I and XIII.</title>
        <authorList>
            <person name="Pearson B.M."/>
            <person name="Hernando Y."/>
            <person name="Payne J."/>
            <person name="Wolf S.S."/>
            <person name="Kalogeropoulos A."/>
            <person name="Schweizer M."/>
        </authorList>
    </citation>
    <scope>NUCLEOTIDE SEQUENCE [GENOMIC DNA]</scope>
    <source>
        <strain>ATCC 96604 / S288c / FY1679</strain>
    </source>
</reference>
<reference key="2">
    <citation type="journal article" date="1997" name="Yeast">
        <title>Sequence and analysis of a 36.2 kb fragment from the right arm of yeast chromosome XV reveals 19 open reading frames including SNF2 (5' end), CPA1, SLY41, a putative transport ATPase, a putative ribosomal protein and an SNF2 homologue.</title>
        <authorList>
            <person name="Poirey R."/>
            <person name="Cziepluch C."/>
            <person name="Tobiasch E."/>
            <person name="Pujol A."/>
            <person name="Kordes E."/>
            <person name="Jauniaux J.-C."/>
        </authorList>
    </citation>
    <scope>NUCLEOTIDE SEQUENCE [GENOMIC DNA]</scope>
    <source>
        <strain>ATCC 96604 / S288c / FY1679</strain>
    </source>
</reference>
<reference key="3">
    <citation type="journal article" date="1997" name="Nature">
        <title>The nucleotide sequence of Saccharomyces cerevisiae chromosome XV.</title>
        <authorList>
            <person name="Dujon B."/>
            <person name="Albermann K."/>
            <person name="Aldea M."/>
            <person name="Alexandraki D."/>
            <person name="Ansorge W."/>
            <person name="Arino J."/>
            <person name="Benes V."/>
            <person name="Bohn C."/>
            <person name="Bolotin-Fukuhara M."/>
            <person name="Bordonne R."/>
            <person name="Boyer J."/>
            <person name="Camasses A."/>
            <person name="Casamayor A."/>
            <person name="Casas C."/>
            <person name="Cheret G."/>
            <person name="Cziepluch C."/>
            <person name="Daignan-Fornier B."/>
            <person name="Dang V.-D."/>
            <person name="de Haan M."/>
            <person name="Delius H."/>
            <person name="Durand P."/>
            <person name="Fairhead C."/>
            <person name="Feldmann H."/>
            <person name="Gaillon L."/>
            <person name="Galisson F."/>
            <person name="Gamo F.-J."/>
            <person name="Gancedo C."/>
            <person name="Goffeau A."/>
            <person name="Goulding S.E."/>
            <person name="Grivell L.A."/>
            <person name="Habbig B."/>
            <person name="Hand N.J."/>
            <person name="Hani J."/>
            <person name="Hattenhorst U."/>
            <person name="Hebling U."/>
            <person name="Hernando Y."/>
            <person name="Herrero E."/>
            <person name="Heumann K."/>
            <person name="Hiesel R."/>
            <person name="Hilger F."/>
            <person name="Hofmann B."/>
            <person name="Hollenberg C.P."/>
            <person name="Hughes B."/>
            <person name="Jauniaux J.-C."/>
            <person name="Kalogeropoulos A."/>
            <person name="Katsoulou C."/>
            <person name="Kordes E."/>
            <person name="Lafuente M.J."/>
            <person name="Landt O."/>
            <person name="Louis E.J."/>
            <person name="Maarse A.C."/>
            <person name="Madania A."/>
            <person name="Mannhaupt G."/>
            <person name="Marck C."/>
            <person name="Martin R.P."/>
            <person name="Mewes H.-W."/>
            <person name="Michaux G."/>
            <person name="Paces V."/>
            <person name="Parle-McDermott A.G."/>
            <person name="Pearson B.M."/>
            <person name="Perrin A."/>
            <person name="Pettersson B."/>
            <person name="Poch O."/>
            <person name="Pohl T.M."/>
            <person name="Poirey R."/>
            <person name="Portetelle D."/>
            <person name="Pujol A."/>
            <person name="Purnelle B."/>
            <person name="Ramezani Rad M."/>
            <person name="Rechmann S."/>
            <person name="Schwager C."/>
            <person name="Schweizer M."/>
            <person name="Sor F."/>
            <person name="Sterky F."/>
            <person name="Tarassov I.A."/>
            <person name="Teodoru C."/>
            <person name="Tettelin H."/>
            <person name="Thierry A."/>
            <person name="Tobiasch E."/>
            <person name="Tzermia M."/>
            <person name="Uhlen M."/>
            <person name="Unseld M."/>
            <person name="Valens M."/>
            <person name="Vandenbol M."/>
            <person name="Vetter I."/>
            <person name="Vlcek C."/>
            <person name="Voet M."/>
            <person name="Volckaert G."/>
            <person name="Voss H."/>
            <person name="Wambutt R."/>
            <person name="Wedler H."/>
            <person name="Wiemann S."/>
            <person name="Winsor B."/>
            <person name="Wolfe K.H."/>
            <person name="Zollner A."/>
            <person name="Zumstein E."/>
            <person name="Kleine K."/>
        </authorList>
    </citation>
    <scope>NUCLEOTIDE SEQUENCE [LARGE SCALE GENOMIC DNA]</scope>
    <source>
        <strain>ATCC 204508 / S288c</strain>
    </source>
</reference>
<reference key="4">
    <citation type="journal article" date="2014" name="G3 (Bethesda)">
        <title>The reference genome sequence of Saccharomyces cerevisiae: Then and now.</title>
        <authorList>
            <person name="Engel S.R."/>
            <person name="Dietrich F.S."/>
            <person name="Fisk D.G."/>
            <person name="Binkley G."/>
            <person name="Balakrishnan R."/>
            <person name="Costanzo M.C."/>
            <person name="Dwight S.S."/>
            <person name="Hitz B.C."/>
            <person name="Karra K."/>
            <person name="Nash R.S."/>
            <person name="Weng S."/>
            <person name="Wong E.D."/>
            <person name="Lloyd P."/>
            <person name="Skrzypek M.S."/>
            <person name="Miyasato S.R."/>
            <person name="Simison M."/>
            <person name="Cherry J.M."/>
        </authorList>
    </citation>
    <scope>GENOME REANNOTATION</scope>
    <source>
        <strain>ATCC 204508 / S288c</strain>
    </source>
</reference>
<reference key="5">
    <citation type="journal article" date="1999" name="EMBO J.">
        <title>Identification by mass spectrometry and functional analysis of novel proteins of the yeast [U4/U6.U5] tri-snRNP.</title>
        <authorList>
            <person name="Gottschalk A."/>
            <person name="Neubauer G."/>
            <person name="Banroques J."/>
            <person name="Mann M."/>
            <person name="Luehrmann R."/>
            <person name="Fabrizio P."/>
        </authorList>
    </citation>
    <scope>SUBUNIT</scope>
    <scope>IDENTIFICATION IN THE U4/U5/U6 TRI-SNRNP COMPLEX</scope>
    <scope>IDENTIFICATION BY MASS SPECTROMETRY</scope>
</reference>
<reference key="6">
    <citation type="journal article" date="1999" name="Proc. Natl. Acad. Sci. U.S.A.">
        <title>Purification of the yeast U4/U6.U5 small nuclear ribonucleoprotein particle and identification of its proteins.</title>
        <authorList>
            <person name="Stevens S.W."/>
            <person name="Abelson J."/>
        </authorList>
    </citation>
    <scope>IDENTIFICATION IN U4/U6.U5 TRI-SNRNP COMPLEX</scope>
    <scope>IDENTIFICATION BY MASS SPECTROMETRY</scope>
</reference>
<reference key="7">
    <citation type="journal article" date="2001" name="Genetics">
        <title>Functional contacts with a range of splicing proteins suggest a central role for Brr2p in the dynamic control of the order of events in spliceosomes of Saccharomyces cerevisiae.</title>
        <authorList>
            <person name="van Nues R.W."/>
            <person name="Beggs J.D."/>
        </authorList>
    </citation>
    <scope>FUNCTION</scope>
    <scope>INTERACTION WITH BRR2</scope>
    <scope>SUBCELLULAR LOCATION</scope>
</reference>
<reference key="8">
    <citation type="journal article" date="2002" name="Mol. Cell">
        <title>Composition and functional characterization of the yeast spliceosomal penta-snRNP.</title>
        <authorList>
            <person name="Stevens S.W."/>
            <person name="Ryan D.E."/>
            <person name="Ge H.Y."/>
            <person name="Moore R.E."/>
            <person name="Young M.K."/>
            <person name="Lee T.D."/>
            <person name="Abelson J."/>
        </authorList>
    </citation>
    <scope>IDENTIFICATION IN U1.U2.U4/U6.U5 PENTA-SNRNP COMPLEX</scope>
    <scope>IDENTIFICATION BY MASS SPECTROMETRY</scope>
</reference>
<reference key="9">
    <citation type="journal article" date="2003" name="Nature">
        <title>Global analysis of protein localization in budding yeast.</title>
        <authorList>
            <person name="Huh W.-K."/>
            <person name="Falvo J.V."/>
            <person name="Gerke L.C."/>
            <person name="Carroll A.S."/>
            <person name="Howson R.W."/>
            <person name="Weissman J.S."/>
            <person name="O'Shea E.K."/>
        </authorList>
    </citation>
    <scope>SUBCELLULAR LOCATION [LARGE SCALE ANALYSIS]</scope>
</reference>
<reference key="10">
    <citation type="journal article" date="2004" name="Curr. Biol.">
        <title>Ubiquitin-like protein Hub1 is required for pre-mRNA splicing and localization of an essential splicing factor in fission yeast.</title>
        <authorList>
            <person name="Wilkinson C.R.M."/>
            <person name="Dittmar G.A.G."/>
            <person name="Ohi M.D."/>
            <person name="Uetz P."/>
            <person name="Jones N."/>
            <person name="Finley D."/>
        </authorList>
    </citation>
    <scope>INTERACTION WITH HUB1</scope>
</reference>
<reference key="11">
    <citation type="journal article" date="2007" name="J. Proteome Res.">
        <title>Large-scale phosphorylation analysis of alpha-factor-arrested Saccharomyces cerevisiae.</title>
        <authorList>
            <person name="Li X."/>
            <person name="Gerber S.A."/>
            <person name="Rudner A.D."/>
            <person name="Beausoleil S.A."/>
            <person name="Haas W."/>
            <person name="Villen J."/>
            <person name="Elias J.E."/>
            <person name="Gygi S.P."/>
        </authorList>
    </citation>
    <scope>PHOSPHORYLATION [LARGE SCALE ANALYSIS] AT SER-268</scope>
    <scope>IDENTIFICATION BY MASS SPECTROMETRY [LARGE SCALE ANALYSIS]</scope>
    <source>
        <strain>ADR376</strain>
    </source>
</reference>
<reference key="12">
    <citation type="journal article" date="2008" name="Mol. Cell. Proteomics">
        <title>A multidimensional chromatography technology for in-depth phosphoproteome analysis.</title>
        <authorList>
            <person name="Albuquerque C.P."/>
            <person name="Smolka M.B."/>
            <person name="Payne S.H."/>
            <person name="Bafna V."/>
            <person name="Eng J."/>
            <person name="Zhou H."/>
        </authorList>
    </citation>
    <scope>PHOSPHORYLATION [LARGE SCALE ANALYSIS] AT SER-268</scope>
    <scope>IDENTIFICATION BY MASS SPECTROMETRY [LARGE SCALE ANALYSIS]</scope>
</reference>
<reference key="13">
    <citation type="journal article" date="2009" name="Science">
        <title>Global analysis of Cdk1 substrate phosphorylation sites provides insights into evolution.</title>
        <authorList>
            <person name="Holt L.J."/>
            <person name="Tuch B.B."/>
            <person name="Villen J."/>
            <person name="Johnson A.D."/>
            <person name="Gygi S.P."/>
            <person name="Morgan D.O."/>
        </authorList>
    </citation>
    <scope>PHOSPHORYLATION [LARGE SCALE ANALYSIS] AT SER-268</scope>
    <scope>IDENTIFICATION BY MASS SPECTROMETRY [LARGE SCALE ANALYSIS]</scope>
</reference>
<reference key="14">
    <citation type="journal article" date="2012" name="Proc. Natl. Acad. Sci. U.S.A.">
        <title>N-terminal acetylome analyses and functional insights of the N-terminal acetyltransferase NatB.</title>
        <authorList>
            <person name="Van Damme P."/>
            <person name="Lasa M."/>
            <person name="Polevoda B."/>
            <person name="Gazquez C."/>
            <person name="Elosegui-Artola A."/>
            <person name="Kim D.S."/>
            <person name="De Juan-Pardo E."/>
            <person name="Demeyer K."/>
            <person name="Hole K."/>
            <person name="Larrea E."/>
            <person name="Timmerman E."/>
            <person name="Prieto J."/>
            <person name="Arnesen T."/>
            <person name="Sherman F."/>
            <person name="Gevaert K."/>
            <person name="Aldabe R."/>
        </authorList>
    </citation>
    <scope>IDENTIFICATION BY MASS SPECTROMETRY [LARGE SCALE ANALYSIS]</scope>
</reference>